<protein>
    <recommendedName>
        <fullName>Free fatty acid receptor 1</fullName>
    </recommendedName>
    <alternativeName>
        <fullName>G-protein coupled receptor 40</fullName>
    </alternativeName>
</protein>
<feature type="chain" id="PRO_0000227756" description="Free fatty acid receptor 1">
    <location>
        <begin position="1"/>
        <end position="300"/>
    </location>
</feature>
<feature type="topological domain" description="Extracellular" evidence="1 3">
    <location>
        <begin position="1"/>
        <end position="8"/>
    </location>
</feature>
<feature type="transmembrane region" description="Helical; Name=1" evidence="1 3">
    <location>
        <begin position="9"/>
        <end position="31"/>
    </location>
</feature>
<feature type="topological domain" description="Cytoplasmic" evidence="1 3">
    <location>
        <begin position="32"/>
        <end position="41"/>
    </location>
</feature>
<feature type="transmembrane region" description="Helical; Name=2" evidence="1 3">
    <location>
        <begin position="42"/>
        <end position="64"/>
    </location>
</feature>
<feature type="topological domain" description="Extracellular" evidence="1 3">
    <location>
        <begin position="65"/>
        <end position="79"/>
    </location>
</feature>
<feature type="transmembrane region" description="Helical; Name=3" evidence="1 3">
    <location>
        <begin position="80"/>
        <end position="101"/>
    </location>
</feature>
<feature type="topological domain" description="Cytoplasmic" evidence="1 3">
    <location>
        <begin position="102"/>
        <end position="121"/>
    </location>
</feature>
<feature type="transmembrane region" description="Helical; Name=4" evidence="1 3">
    <location>
        <begin position="122"/>
        <end position="142"/>
    </location>
</feature>
<feature type="topological domain" description="Extracellular" evidence="1 3">
    <location>
        <begin position="143"/>
        <end position="178"/>
    </location>
</feature>
<feature type="transmembrane region" description="Helical; Name=5" evidence="1 3">
    <location>
        <begin position="179"/>
        <end position="200"/>
    </location>
</feature>
<feature type="topological domain" description="Cytoplasmic" evidence="1 3">
    <location>
        <begin position="201"/>
        <end position="223"/>
    </location>
</feature>
<feature type="transmembrane region" description="Helical; Name=6" evidence="1 3">
    <location>
        <begin position="224"/>
        <end position="248"/>
    </location>
</feature>
<feature type="topological domain" description="Extracellular" evidence="1 3">
    <location>
        <begin position="249"/>
        <end position="256"/>
    </location>
</feature>
<feature type="transmembrane region" description="Helical; Name=7" evidence="1 3">
    <location>
        <begin position="257"/>
        <end position="279"/>
    </location>
</feature>
<feature type="topological domain" description="Cytoplasmic" evidence="1 3">
    <location>
        <begin position="280"/>
        <end position="300"/>
    </location>
</feature>
<feature type="site" description="Important for receptor activation" evidence="1">
    <location>
        <position position="145"/>
    </location>
</feature>
<feature type="site" description="Important for receptor activation" evidence="1">
    <location>
        <position position="172"/>
    </location>
</feature>
<feature type="glycosylation site" description="N-linked (GlcNAc...) asparagine" evidence="3">
    <location>
        <position position="153"/>
    </location>
</feature>
<feature type="disulfide bond" evidence="1">
    <location>
        <begin position="79"/>
        <end position="170"/>
    </location>
</feature>
<organism>
    <name type="scientific">Rattus norvegicus</name>
    <name type="common">Rat</name>
    <dbReference type="NCBI Taxonomy" id="10116"/>
    <lineage>
        <taxon>Eukaryota</taxon>
        <taxon>Metazoa</taxon>
        <taxon>Chordata</taxon>
        <taxon>Craniata</taxon>
        <taxon>Vertebrata</taxon>
        <taxon>Euteleostomi</taxon>
        <taxon>Mammalia</taxon>
        <taxon>Eutheria</taxon>
        <taxon>Euarchontoglires</taxon>
        <taxon>Glires</taxon>
        <taxon>Rodentia</taxon>
        <taxon>Myomorpha</taxon>
        <taxon>Muroidea</taxon>
        <taxon>Muridae</taxon>
        <taxon>Murinae</taxon>
        <taxon>Rattus</taxon>
    </lineage>
</organism>
<name>FFAR1_RAT</name>
<accession>Q8K3T4</accession>
<proteinExistence type="evidence at transcript level"/>
<reference key="1">
    <citation type="journal article" date="2003" name="J. Biol. Chem.">
        <title>The orphan G protein-coupled receptor GPR40 is activated by medium and long-chain fatty acids.</title>
        <authorList>
            <person name="Briscoe C.P."/>
            <person name="Tadayyon M."/>
            <person name="Andrews J.L."/>
            <person name="Benson W.G."/>
            <person name="Chambers J.K."/>
            <person name="Eilert M.M."/>
            <person name="Ellis C."/>
            <person name="Elshourbagy N.A."/>
            <person name="Goetz A.S."/>
            <person name="Minnick D.T."/>
            <person name="Murdock P.R."/>
            <person name="Sauls H.R. Jr."/>
            <person name="Shabon U."/>
            <person name="Spinage L.D."/>
            <person name="Strum J.C."/>
            <person name="Szekeres P.G."/>
            <person name="Tan K.B."/>
            <person name="Way J.M."/>
            <person name="Ignar D.M."/>
            <person name="Wilson S."/>
            <person name="Muir A.I."/>
        </authorList>
    </citation>
    <scope>NUCLEOTIDE SEQUENCE [MRNA]</scope>
    <scope>TISSUE SPECIFICITY</scope>
    <source>
        <strain>Sprague-Dawley</strain>
    </source>
</reference>
<reference key="2">
    <citation type="journal article" date="2003" name="Nature">
        <title>Free fatty acids regulate insulin secretion from pancreatic beta cells through GPR40.</title>
        <authorList>
            <person name="Itoh Y."/>
            <person name="Kawamata Y."/>
            <person name="Harada M."/>
            <person name="Kobayashi M."/>
            <person name="Fujii R."/>
            <person name="Fukusumi S."/>
            <person name="Ogi K."/>
            <person name="Hosoya M."/>
            <person name="Tanaka Y."/>
            <person name="Uejima H."/>
            <person name="Tanaka H."/>
            <person name="Maruyama M."/>
            <person name="Satoh R."/>
            <person name="Okubo S."/>
            <person name="Kizawa H."/>
            <person name="Komatsu H."/>
            <person name="Matsumura F."/>
            <person name="Noguchi Y."/>
            <person name="Shinohara T."/>
            <person name="Hinuma S."/>
            <person name="Fujisawa Y."/>
            <person name="Fujino M."/>
        </authorList>
    </citation>
    <scope>NUCLEOTIDE SEQUENCE [MRNA]</scope>
    <scope>TISSUE SPECIFICITY</scope>
</reference>
<keyword id="KW-1003">Cell membrane</keyword>
<keyword id="KW-1015">Disulfide bond</keyword>
<keyword id="KW-0297">G-protein coupled receptor</keyword>
<keyword id="KW-0325">Glycoprotein</keyword>
<keyword id="KW-0446">Lipid-binding</keyword>
<keyword id="KW-0472">Membrane</keyword>
<keyword id="KW-0675">Receptor</keyword>
<keyword id="KW-1185">Reference proteome</keyword>
<keyword id="KW-0807">Transducer</keyword>
<keyword id="KW-0812">Transmembrane</keyword>
<keyword id="KW-1133">Transmembrane helix</keyword>
<dbReference type="EMBL" id="AF539810">
    <property type="protein sequence ID" value="AAN03479.1"/>
    <property type="molecule type" value="mRNA"/>
</dbReference>
<dbReference type="EMBL" id="AB095744">
    <property type="protein sequence ID" value="BAC82554.1"/>
    <property type="molecule type" value="mRNA"/>
</dbReference>
<dbReference type="RefSeq" id="NP_695216.1">
    <property type="nucleotide sequence ID" value="NM_153304.2"/>
</dbReference>
<dbReference type="SMR" id="Q8K3T4"/>
<dbReference type="FunCoup" id="Q8K3T4">
    <property type="interactions" value="108"/>
</dbReference>
<dbReference type="STRING" id="10116.ENSRNOP00000028533"/>
<dbReference type="BindingDB" id="Q8K3T4"/>
<dbReference type="ChEMBL" id="CHEMBL1795180"/>
<dbReference type="GlyCosmos" id="Q8K3T4">
    <property type="glycosylation" value="1 site, No reported glycans"/>
</dbReference>
<dbReference type="GlyGen" id="Q8K3T4">
    <property type="glycosylation" value="1 site"/>
</dbReference>
<dbReference type="PhosphoSitePlus" id="Q8K3T4"/>
<dbReference type="PaxDb" id="10116-ENSRNOP00000028533"/>
<dbReference type="ABCD" id="Q8K3T4">
    <property type="antibodies" value="6 sequenced antibodies"/>
</dbReference>
<dbReference type="GeneID" id="266607"/>
<dbReference type="KEGG" id="rno:266607"/>
<dbReference type="AGR" id="RGD:628613"/>
<dbReference type="CTD" id="2864"/>
<dbReference type="RGD" id="628613">
    <property type="gene designation" value="Ffar1"/>
</dbReference>
<dbReference type="eggNOG" id="ENOG502QVCS">
    <property type="taxonomic scope" value="Eukaryota"/>
</dbReference>
<dbReference type="InParanoid" id="Q8K3T4"/>
<dbReference type="OrthoDB" id="71354at9989"/>
<dbReference type="PhylomeDB" id="Q8K3T4"/>
<dbReference type="Reactome" id="R-RNO-381771">
    <property type="pathway name" value="Synthesis, secretion, and inactivation of Glucagon-like Peptide-1 (GLP-1)"/>
</dbReference>
<dbReference type="Reactome" id="R-RNO-400511">
    <property type="pathway name" value="Synthesis, secretion, and inactivation of Glucose-dependent Insulinotropic Polypeptide (GIP)"/>
</dbReference>
<dbReference type="Reactome" id="R-RNO-416476">
    <property type="pathway name" value="G alpha (q) signalling events"/>
</dbReference>
<dbReference type="Reactome" id="R-RNO-434316">
    <property type="pathway name" value="Fatty Acids bound to GPR40 (FFAR1) regulate insulin secretion"/>
</dbReference>
<dbReference type="Reactome" id="R-RNO-444209">
    <property type="pathway name" value="Free fatty acid receptors"/>
</dbReference>
<dbReference type="PRO" id="PR:Q8K3T4"/>
<dbReference type="Proteomes" id="UP000002494">
    <property type="component" value="Unplaced"/>
</dbReference>
<dbReference type="GO" id="GO:0005886">
    <property type="term" value="C:plasma membrane"/>
    <property type="evidence" value="ECO:0000250"/>
    <property type="project" value="UniProtKB"/>
</dbReference>
<dbReference type="GO" id="GO:0045125">
    <property type="term" value="F:bioactive lipid receptor activity"/>
    <property type="evidence" value="ECO:0000250"/>
    <property type="project" value="UniProtKB"/>
</dbReference>
<dbReference type="GO" id="GO:0005504">
    <property type="term" value="F:fatty acid binding"/>
    <property type="evidence" value="ECO:0000314"/>
    <property type="project" value="RGD"/>
</dbReference>
<dbReference type="GO" id="GO:0004930">
    <property type="term" value="F:G protein-coupled receptor activity"/>
    <property type="evidence" value="ECO:0000266"/>
    <property type="project" value="RGD"/>
</dbReference>
<dbReference type="GO" id="GO:0007186">
    <property type="term" value="P:G protein-coupled receptor signaling pathway"/>
    <property type="evidence" value="ECO:0000314"/>
    <property type="project" value="RGD"/>
</dbReference>
<dbReference type="GO" id="GO:0042593">
    <property type="term" value="P:glucose homeostasis"/>
    <property type="evidence" value="ECO:0000250"/>
    <property type="project" value="UniProtKB"/>
</dbReference>
<dbReference type="GO" id="GO:0030073">
    <property type="term" value="P:insulin secretion"/>
    <property type="evidence" value="ECO:0000266"/>
    <property type="project" value="RGD"/>
</dbReference>
<dbReference type="GO" id="GO:1990806">
    <property type="term" value="P:ligand-gated ion channel signaling pathway"/>
    <property type="evidence" value="ECO:0000266"/>
    <property type="project" value="RGD"/>
</dbReference>
<dbReference type="GO" id="GO:0032691">
    <property type="term" value="P:negative regulation of interleukin-1 beta production"/>
    <property type="evidence" value="ECO:0000266"/>
    <property type="project" value="RGD"/>
</dbReference>
<dbReference type="GO" id="GO:0007200">
    <property type="term" value="P:phospholipase C-activating G protein-coupled receptor signaling pathway"/>
    <property type="evidence" value="ECO:0000266"/>
    <property type="project" value="RGD"/>
</dbReference>
<dbReference type="GO" id="GO:0051928">
    <property type="term" value="P:positive regulation of calcium ion transport"/>
    <property type="evidence" value="ECO:0000250"/>
    <property type="project" value="UniProtKB"/>
</dbReference>
<dbReference type="GO" id="GO:0010524">
    <property type="term" value="P:positive regulation of calcium ion transport into cytosol"/>
    <property type="evidence" value="ECO:0000315"/>
    <property type="project" value="RGD"/>
</dbReference>
<dbReference type="GO" id="GO:0007204">
    <property type="term" value="P:positive regulation of cytosolic calcium ion concentration"/>
    <property type="evidence" value="ECO:0000250"/>
    <property type="project" value="UniProtKB"/>
</dbReference>
<dbReference type="GO" id="GO:0032024">
    <property type="term" value="P:positive regulation of insulin secretion"/>
    <property type="evidence" value="ECO:0000315"/>
    <property type="project" value="RGD"/>
</dbReference>
<dbReference type="GO" id="GO:0070542">
    <property type="term" value="P:response to fatty acid"/>
    <property type="evidence" value="ECO:0000250"/>
    <property type="project" value="UniProtKB"/>
</dbReference>
<dbReference type="FunFam" id="1.20.1070.10:FF:000173">
    <property type="entry name" value="Free fatty acid receptor 1"/>
    <property type="match status" value="1"/>
</dbReference>
<dbReference type="Gene3D" id="1.20.1070.10">
    <property type="entry name" value="Rhodopsin 7-helix transmembrane proteins"/>
    <property type="match status" value="1"/>
</dbReference>
<dbReference type="InterPro" id="IPR000276">
    <property type="entry name" value="GPCR_Rhodpsn"/>
</dbReference>
<dbReference type="InterPro" id="IPR017452">
    <property type="entry name" value="GPCR_Rhodpsn_7TM"/>
</dbReference>
<dbReference type="InterPro" id="IPR013312">
    <property type="entry name" value="GPR40-rel_orph"/>
</dbReference>
<dbReference type="InterPro" id="IPR013313">
    <property type="entry name" value="GPR40_recept_FA"/>
</dbReference>
<dbReference type="PANTHER" id="PTHR45822:SF4">
    <property type="entry name" value="FREE FATTY ACID RECEPTOR 1"/>
    <property type="match status" value="1"/>
</dbReference>
<dbReference type="PANTHER" id="PTHR45822">
    <property type="entry name" value="FREE FATTY ACID RECEPTOR 2-RELATED"/>
    <property type="match status" value="1"/>
</dbReference>
<dbReference type="Pfam" id="PF00001">
    <property type="entry name" value="7tm_1"/>
    <property type="match status" value="1"/>
</dbReference>
<dbReference type="PRINTS" id="PR01905">
    <property type="entry name" value="FATTYACIDR"/>
</dbReference>
<dbReference type="PRINTS" id="PR00237">
    <property type="entry name" value="GPCRRHODOPSN"/>
</dbReference>
<dbReference type="PRINTS" id="PR01904">
    <property type="entry name" value="GPR40FAMILY"/>
</dbReference>
<dbReference type="SUPFAM" id="SSF81321">
    <property type="entry name" value="Family A G protein-coupled receptor-like"/>
    <property type="match status" value="1"/>
</dbReference>
<dbReference type="PROSITE" id="PS50262">
    <property type="entry name" value="G_PROTEIN_RECEP_F1_2"/>
    <property type="match status" value="1"/>
</dbReference>
<evidence type="ECO:0000250" key="1">
    <source>
        <dbReference type="UniProtKB" id="O14842"/>
    </source>
</evidence>
<evidence type="ECO:0000250" key="2">
    <source>
        <dbReference type="UniProtKB" id="Q76JU9"/>
    </source>
</evidence>
<evidence type="ECO:0000255" key="3"/>
<evidence type="ECO:0000255" key="4">
    <source>
        <dbReference type="PROSITE-ProRule" id="PRU00521"/>
    </source>
</evidence>
<evidence type="ECO:0000269" key="5">
    <source>
    </source>
</evidence>
<evidence type="ECO:0000269" key="6">
    <source>
    </source>
</evidence>
<sequence>MDLPPQLSFALYVSAFALGFPLNLLAIRGAVSHAKLRLTPSLVYTLHLACSDLLLAITLPLKAVEALASGVWPLPLPFCPVFALAHFAPLYAGGGFLAALSAGRYLGAAFPFGYQAIRRPCYSWGVCVAIWALVLCHLGLALGLEAPRGWVDNTTSSLGINIPVNGSPVCLEAWDPDSARPARLSFSILLFFLPLVITAFCYVGCLRALVHSGLSHKRKLRAAWVAGGALLTLLLCLGPYNASNVASFINPDLEGSWRKLGLITGAWSVVLNPLVTGYLGTGPGQGTICVTRTPRGTIQK</sequence>
<comment type="function">
    <text evidence="1 2">G-protein coupled receptor for medium and long chain saturated and unsaturated fatty acids that plays an important role in glucose homeostasis. Fatty acid binding increases glucose-stimulated insulin secretion, and may also enhance the secretion of glucagon-like peptide 1 (GLP-1). May also play a role in bone homeostasis; receptor signaling activates pathways that inhibit osteoclast differentiation. Ligand binding leads to a conformation change that triggers signaling via G-proteins that activate phospholipase C, leading to an increase of the intracellular calcium concentration. Seems to act through a G(q) and G(i)-mediated pathway. Mediates the anti-inflammatory effects of omega-3 polyunsaturated fatty acids (PUFAs) via inhibition of NLRP3 inflammasome activation.</text>
</comment>
<comment type="subcellular location">
    <subcellularLocation>
        <location evidence="1">Cell membrane</location>
        <topology evidence="1">Multi-pass membrane protein</topology>
    </subcellularLocation>
</comment>
<comment type="tissue specificity">
    <text evidence="5 6">Expressed abundantly in pancreatic beta cells.</text>
</comment>
<comment type="similarity">
    <text evidence="4">Belongs to the G-protein coupled receptor 1 family.</text>
</comment>
<gene>
    <name type="primary">Ffar1</name>
    <name type="synonym">Gpr40</name>
</gene>